<sequence>MAVLGITVALLVWIATLLLVSIWKQIYRSWNLPPGPFPIPFFGNIFQLDLKDIPKSLTKLAKRFGPVFTLHLGQRRIVVLHGYKAVKEVLLNHKNEFSGRGDIPVFQEYKNKGIIFNNGPTWKDVRRFSLSILRDWGMGKQGNEARIQREAHFLVEELKKTKGQPFDPTFLIGCAPCNVIADILFNKRFDYDDKKCLELMSLFNENFYLLSTPWIQAYNYFSDYLQYLPGSHRKVMKNVSEIRQYTLGKAKEHLKSLDINCPRDVTDCLLIEMEKEKHSQEPMYTMENISVTLADLFFAGTETTSTTLRYGLLILMKYPEIEEKLHEEIDRVIGPSRAPAVRDRMNMPYMDAVVHEIQRFINLVPSNLPHEATRDTVFRGYVIPKGTVVIPTLDSLLFDNYEFPDPETFKPEHFLNENGKFKYSDYFKAFSAGKRVCVGEGLARMELFLLLSAILQHFNLKSLVDPKDIDLSPVTIGFGSIPREFKLCVIPRS</sequence>
<accession>Q05421</accession>
<accession>Q9Z198</accession>
<feature type="chain" id="PRO_0000051755" description="Cytochrome P450 2E1">
    <location>
        <begin position="1"/>
        <end position="493"/>
    </location>
</feature>
<feature type="binding site" evidence="1">
    <location>
        <begin position="298"/>
        <end position="303"/>
    </location>
    <ligand>
        <name>substrate</name>
    </ligand>
</feature>
<feature type="binding site" description="axial binding residue" evidence="1">
    <location>
        <position position="437"/>
    </location>
    <ligand>
        <name>heme</name>
        <dbReference type="ChEBI" id="CHEBI:30413"/>
    </ligand>
    <ligandPart>
        <name>Fe</name>
        <dbReference type="ChEBI" id="CHEBI:18248"/>
    </ligandPart>
</feature>
<reference key="1">
    <citation type="journal article" date="1993" name="J. Biol. Chem.">
        <title>Mouse ethanol-inducible cytochrome P-450 (P450IIE1). Characterization of cDNA clones and testosterone induction in kidney tissue.</title>
        <authorList>
            <person name="Davis J.F."/>
            <person name="Felder M.R."/>
        </authorList>
    </citation>
    <scope>NUCLEOTIDE SEQUENCE [MRNA]</scope>
    <source>
        <strain>C57BL/6S</strain>
        <tissue>Liver</tissue>
    </source>
</reference>
<reference key="2">
    <citation type="journal article" date="1992" name="Biochem. J.">
        <title>cDNA sequence, deduced amino acid sequence, predicted gene structure and chemical regulation of mouse Cyp2e1.</title>
        <authorList>
            <person name="Freeman J.E."/>
            <person name="Stirling D."/>
            <person name="Russel A.L."/>
            <person name="Wolf C.R."/>
        </authorList>
    </citation>
    <scope>NUCLEOTIDE SEQUENCE [MRNA]</scope>
    <source>
        <strain>BALB/cJ</strain>
        <tissue>Liver</tissue>
    </source>
</reference>
<reference key="3">
    <citation type="journal article" date="2004" name="Genome Res.">
        <title>The status, quality, and expansion of the NIH full-length cDNA project: the Mammalian Gene Collection (MGC).</title>
        <authorList>
            <consortium name="The MGC Project Team"/>
        </authorList>
    </citation>
    <scope>NUCLEOTIDE SEQUENCE [LARGE SCALE MRNA]</scope>
    <source>
        <tissue>Kidney</tissue>
    </source>
</reference>
<reference key="4">
    <citation type="journal article" date="1983" name="Dokl. Akad. Nauk SSSR">
        <title>Primary structure of the repeating element B2 and of the adjoining sequences in cloned mRNA actively transcribing in mouse liver cells.</title>
        <authorList>
            <person name="Ivanov P.L."/>
            <person name="Ryskov A.P."/>
            <person name="Kramerov D.A."/>
            <person name="Georgiev G.P."/>
        </authorList>
    </citation>
    <scope>NUCLEOTIDE SEQUENCE [MRNA] OF 455-493</scope>
    <source>
        <tissue>Liver</tissue>
    </source>
</reference>
<reference key="5">
    <citation type="journal article" date="1983" name="Nucleic Acids Res.">
        <title>Mouse ubiquitous B2 repeat in polysomal and cytoplasmic poly(A)+RNAs: unidirectional orientation and 3'-end localization.</title>
        <authorList>
            <person name="Ryskov A.P."/>
            <person name="Ivanov P.L."/>
            <person name="Kramerov D.A."/>
            <person name="Georgiev G.P."/>
        </authorList>
    </citation>
    <scope>NUCLEOTIDE SEQUENCE [MRNA] OF 455-493</scope>
</reference>
<reference key="6">
    <citation type="journal article" date="1984" name="Mol. Biol. (Mosk.)">
        <title>Universal orientation and 3' terminal localization of repetitive sequences of the B2 family in mRNA.</title>
        <authorList>
            <person name="Ryskov A.P."/>
            <person name="Ivanov P.L."/>
            <person name="Kramerov D.A."/>
            <person name="Georgiev G.P."/>
        </authorList>
    </citation>
    <scope>NUCLEOTIDE SEQUENCE [MRNA] OF 455-493</scope>
</reference>
<reference key="7">
    <citation type="journal article" date="2010" name="Cell">
        <title>A tissue-specific atlas of mouse protein phosphorylation and expression.</title>
        <authorList>
            <person name="Huttlin E.L."/>
            <person name="Jedrychowski M.P."/>
            <person name="Elias J.E."/>
            <person name="Goswami T."/>
            <person name="Rad R."/>
            <person name="Beausoleil S.A."/>
            <person name="Villen J."/>
            <person name="Haas W."/>
            <person name="Sowa M.E."/>
            <person name="Gygi S.P."/>
        </authorList>
    </citation>
    <scope>IDENTIFICATION BY MASS SPECTROMETRY [LARGE SCALE ANALYSIS]</scope>
    <source>
        <tissue>Kidney</tissue>
        <tissue>Liver</tissue>
    </source>
</reference>
<gene>
    <name type="primary">Cyp2e1</name>
    <name type="synonym">Cyp2e</name>
    <name type="synonym">Cyp2e-1</name>
</gene>
<organism>
    <name type="scientific">Mus musculus</name>
    <name type="common">Mouse</name>
    <dbReference type="NCBI Taxonomy" id="10090"/>
    <lineage>
        <taxon>Eukaryota</taxon>
        <taxon>Metazoa</taxon>
        <taxon>Chordata</taxon>
        <taxon>Craniata</taxon>
        <taxon>Vertebrata</taxon>
        <taxon>Euteleostomi</taxon>
        <taxon>Mammalia</taxon>
        <taxon>Eutheria</taxon>
        <taxon>Euarchontoglires</taxon>
        <taxon>Glires</taxon>
        <taxon>Rodentia</taxon>
        <taxon>Myomorpha</taxon>
        <taxon>Muroidea</taxon>
        <taxon>Muridae</taxon>
        <taxon>Murinae</taxon>
        <taxon>Mus</taxon>
        <taxon>Mus</taxon>
    </lineage>
</organism>
<comment type="function">
    <text evidence="2">A cytochrome P450 monooxygenase involved in the metabolism of fatty acids. Mechanistically, uses molecular oxygen inserting one oxygen atom into a substrate, and reducing the second into a water molecule, with two electrons provided by NADPH via cytochrome P450 reductase (NADPH--hemoprotein reductase). Catalyzes the hydroxylation of carbon-hydrogen bonds. Hydroxylates fatty acids specifically at the omega-1 position displaying the highest catalytic activity for saturated fatty acids. May be involved in the oxidative metabolism of xenobiotics.</text>
</comment>
<comment type="catalytic activity">
    <reaction evidence="2">
        <text>an organic molecule + reduced [NADPH--hemoprotein reductase] + O2 = an alcohol + oxidized [NADPH--hemoprotein reductase] + H2O + H(+)</text>
        <dbReference type="Rhea" id="RHEA:17149"/>
        <dbReference type="Rhea" id="RHEA-COMP:11964"/>
        <dbReference type="Rhea" id="RHEA-COMP:11965"/>
        <dbReference type="ChEBI" id="CHEBI:15377"/>
        <dbReference type="ChEBI" id="CHEBI:15378"/>
        <dbReference type="ChEBI" id="CHEBI:15379"/>
        <dbReference type="ChEBI" id="CHEBI:30879"/>
        <dbReference type="ChEBI" id="CHEBI:57618"/>
        <dbReference type="ChEBI" id="CHEBI:58210"/>
        <dbReference type="ChEBI" id="CHEBI:142491"/>
        <dbReference type="EC" id="1.14.14.1"/>
    </reaction>
    <physiologicalReaction direction="left-to-right" evidence="2">
        <dbReference type="Rhea" id="RHEA:17150"/>
    </physiologicalReaction>
</comment>
<comment type="catalytic activity">
    <reaction evidence="2">
        <text>(5Z,8Z,11Z)-eicosatrienoate + reduced [NADPH--hemoprotein reductase] + O2 = 19-hydroxy-(5Z,8Z,11Z)-eicosatrienoate + oxidized [NADPH--hemoprotein reductase] + H2O + H(+)</text>
        <dbReference type="Rhea" id="RHEA:50076"/>
        <dbReference type="Rhea" id="RHEA-COMP:11964"/>
        <dbReference type="Rhea" id="RHEA-COMP:11965"/>
        <dbReference type="ChEBI" id="CHEBI:15377"/>
        <dbReference type="ChEBI" id="CHEBI:15378"/>
        <dbReference type="ChEBI" id="CHEBI:15379"/>
        <dbReference type="ChEBI" id="CHEBI:57618"/>
        <dbReference type="ChEBI" id="CHEBI:58210"/>
        <dbReference type="ChEBI" id="CHEBI:78043"/>
        <dbReference type="ChEBI" id="CHEBI:132024"/>
    </reaction>
    <physiologicalReaction direction="left-to-right" evidence="2">
        <dbReference type="Rhea" id="RHEA:50077"/>
    </physiologicalReaction>
</comment>
<comment type="catalytic activity">
    <reaction evidence="2">
        <text>(5Z,8Z,11Z,14Z,17Z)-eicosapentaenoate + reduced [NADPH--hemoprotein reductase] + O2 = 19-hydroxy-(5Z,8Z,11Z,14Z,17Z)-eicosapentaenoate + oxidized [NADPH--hemoprotein reductase] + H2O + H(+)</text>
        <dbReference type="Rhea" id="RHEA:39787"/>
        <dbReference type="Rhea" id="RHEA-COMP:11964"/>
        <dbReference type="Rhea" id="RHEA-COMP:11965"/>
        <dbReference type="ChEBI" id="CHEBI:15377"/>
        <dbReference type="ChEBI" id="CHEBI:15378"/>
        <dbReference type="ChEBI" id="CHEBI:15379"/>
        <dbReference type="ChEBI" id="CHEBI:57618"/>
        <dbReference type="ChEBI" id="CHEBI:58210"/>
        <dbReference type="ChEBI" id="CHEBI:58562"/>
        <dbReference type="ChEBI" id="CHEBI:76636"/>
    </reaction>
    <physiologicalReaction direction="left-to-right" evidence="2">
        <dbReference type="Rhea" id="RHEA:39788"/>
    </physiologicalReaction>
</comment>
<comment type="catalytic activity">
    <reaction evidence="2">
        <text>(4Z,7Z,10Z,13Z,16Z,19Z)-docosahexaenoate + reduced [NADPH--hemoprotein reductase] + O2 = 21-hydroxy-(4Z,7Z,10Z,13Z,16Z,19Z)-docosahexaenoate + oxidized [NADPH--hemoprotein reductase] + H2O + H(+)</text>
        <dbReference type="Rhea" id="RHEA:50088"/>
        <dbReference type="Rhea" id="RHEA-COMP:11964"/>
        <dbReference type="Rhea" id="RHEA-COMP:11965"/>
        <dbReference type="ChEBI" id="CHEBI:15377"/>
        <dbReference type="ChEBI" id="CHEBI:15378"/>
        <dbReference type="ChEBI" id="CHEBI:15379"/>
        <dbReference type="ChEBI" id="CHEBI:57618"/>
        <dbReference type="ChEBI" id="CHEBI:58210"/>
        <dbReference type="ChEBI" id="CHEBI:77016"/>
        <dbReference type="ChEBI" id="CHEBI:132025"/>
    </reaction>
    <physiologicalReaction direction="left-to-right" evidence="2">
        <dbReference type="Rhea" id="RHEA:50089"/>
    </physiologicalReaction>
</comment>
<comment type="catalytic activity">
    <reaction evidence="2">
        <text>dodecanoate + reduced [NADPH--hemoprotein reductase] + O2 = 11-hydroxydodecanoate + oxidized [NADPH--hemoprotein reductase] + H2O + H(+)</text>
        <dbReference type="Rhea" id="RHEA:39751"/>
        <dbReference type="Rhea" id="RHEA-COMP:11964"/>
        <dbReference type="Rhea" id="RHEA-COMP:11965"/>
        <dbReference type="ChEBI" id="CHEBI:15377"/>
        <dbReference type="ChEBI" id="CHEBI:15378"/>
        <dbReference type="ChEBI" id="CHEBI:15379"/>
        <dbReference type="ChEBI" id="CHEBI:18262"/>
        <dbReference type="ChEBI" id="CHEBI:57618"/>
        <dbReference type="ChEBI" id="CHEBI:58210"/>
        <dbReference type="ChEBI" id="CHEBI:76628"/>
    </reaction>
    <physiologicalReaction direction="left-to-right" evidence="2">
        <dbReference type="Rhea" id="RHEA:39752"/>
    </physiologicalReaction>
</comment>
<comment type="catalytic activity">
    <reaction evidence="2">
        <text>tetradecanoate + reduced [NADPH--hemoprotein reductase] + O2 = 13-hydroxytetradecanoate + oxidized [NADPH--hemoprotein reductase] + H2O + H(+)</text>
        <dbReference type="Rhea" id="RHEA:50096"/>
        <dbReference type="Rhea" id="RHEA-COMP:11964"/>
        <dbReference type="Rhea" id="RHEA-COMP:11965"/>
        <dbReference type="ChEBI" id="CHEBI:15377"/>
        <dbReference type="ChEBI" id="CHEBI:15378"/>
        <dbReference type="ChEBI" id="CHEBI:15379"/>
        <dbReference type="ChEBI" id="CHEBI:30807"/>
        <dbReference type="ChEBI" id="CHEBI:57618"/>
        <dbReference type="ChEBI" id="CHEBI:58210"/>
        <dbReference type="ChEBI" id="CHEBI:132031"/>
    </reaction>
    <physiologicalReaction direction="left-to-right" evidence="2">
        <dbReference type="Rhea" id="RHEA:50097"/>
    </physiologicalReaction>
</comment>
<comment type="catalytic activity">
    <reaction evidence="2">
        <text>4-nitrophenol + NADPH + O2 + H(+) = 4-nitrocatechol + NADP(+) + H2O</text>
        <dbReference type="Rhea" id="RHEA:26205"/>
        <dbReference type="ChEBI" id="CHEBI:15377"/>
        <dbReference type="ChEBI" id="CHEBI:15378"/>
        <dbReference type="ChEBI" id="CHEBI:15379"/>
        <dbReference type="ChEBI" id="CHEBI:57730"/>
        <dbReference type="ChEBI" id="CHEBI:57783"/>
        <dbReference type="ChEBI" id="CHEBI:57917"/>
        <dbReference type="ChEBI" id="CHEBI:58349"/>
        <dbReference type="EC" id="1.14.13.n7"/>
    </reaction>
    <physiologicalReaction direction="left-to-right" evidence="2">
        <dbReference type="Rhea" id="RHEA:26206"/>
    </physiologicalReaction>
</comment>
<comment type="cofactor">
    <cofactor evidence="1">
        <name>heme</name>
        <dbReference type="ChEBI" id="CHEBI:30413"/>
    </cofactor>
</comment>
<comment type="activity regulation">
    <text evidence="2">The omega-1 hydroxylase activity is stimulated by cytochrome b5.</text>
</comment>
<comment type="pathway">
    <text evidence="2">Lipid metabolism; fatty acid metabolism.</text>
</comment>
<comment type="subunit">
    <text evidence="3">Interacts with chaperones HSP70 and HSP90; this interaction is required for initial targeting to mitochondria.</text>
</comment>
<comment type="subcellular location">
    <subcellularLocation>
        <location evidence="3">Endoplasmic reticulum membrane</location>
        <topology evidence="3">Peripheral membrane protein</topology>
    </subcellularLocation>
    <subcellularLocation>
        <location evidence="3">Microsome membrane</location>
        <topology evidence="3">Peripheral membrane protein</topology>
    </subcellularLocation>
    <subcellularLocation>
        <location evidence="3">Mitochondrion inner membrane</location>
        <topology evidence="3">Peripheral membrane protein</topology>
    </subcellularLocation>
    <text evidence="3">Post-translationally targeted to mitochondria. TOMM70 is required for the translocation across the mitochondrial outer membrane. After translocation into the matrix, associates with the inner membrane as a membrane extrinsic protein.</text>
</comment>
<comment type="tissue specificity">
    <text>Highest level in the liver and to a lesser extent in the kidney, with a higher level in the male kidney than in the female.</text>
</comment>
<comment type="developmental stage">
    <text>Detectable in the female liver on day 1 and reaches steady state levels on days 16-20.</text>
</comment>
<comment type="induction">
    <text>By ethanol and acetone in the liver and by testosterone in the kidney and adrenal tissues.</text>
</comment>
<comment type="similarity">
    <text evidence="4">Belongs to the cytochrome P450 family.</text>
</comment>
<evidence type="ECO:0000250" key="1"/>
<evidence type="ECO:0000250" key="2">
    <source>
        <dbReference type="UniProtKB" id="P05181"/>
    </source>
</evidence>
<evidence type="ECO:0000250" key="3">
    <source>
        <dbReference type="UniProtKB" id="P05182"/>
    </source>
</evidence>
<evidence type="ECO:0000305" key="4"/>
<proteinExistence type="evidence at protein level"/>
<dbReference type="EC" id="1.14.14.1" evidence="2"/>
<dbReference type="EC" id="1.14.13.n7" evidence="2"/>
<dbReference type="EMBL" id="L11650">
    <property type="protein sequence ID" value="AAA39879.1"/>
    <property type="molecule type" value="mRNA"/>
</dbReference>
<dbReference type="EMBL" id="X62595">
    <property type="protein sequence ID" value="CAA44481.1"/>
    <property type="molecule type" value="mRNA"/>
</dbReference>
<dbReference type="EMBL" id="BC013451">
    <property type="protein sequence ID" value="AAH13451.1"/>
    <property type="molecule type" value="mRNA"/>
</dbReference>
<dbReference type="EMBL" id="M54877">
    <property type="protein sequence ID" value="AAA37275.1"/>
    <property type="molecule type" value="mRNA"/>
</dbReference>
<dbReference type="EMBL" id="X01026">
    <property type="protein sequence ID" value="CAA25510.1"/>
    <property type="status" value="ALT_SEQ"/>
    <property type="molecule type" value="mRNA"/>
</dbReference>
<dbReference type="CCDS" id="CCDS21985.1"/>
<dbReference type="PIR" id="A47350">
    <property type="entry name" value="A47350"/>
</dbReference>
<dbReference type="PIR" id="S19657">
    <property type="entry name" value="A21231"/>
</dbReference>
<dbReference type="RefSeq" id="NP_067257.1">
    <property type="nucleotide sequence ID" value="NM_021282.3"/>
</dbReference>
<dbReference type="SMR" id="Q05421"/>
<dbReference type="BioGRID" id="199023">
    <property type="interactions" value="7"/>
</dbReference>
<dbReference type="FunCoup" id="Q05421">
    <property type="interactions" value="779"/>
</dbReference>
<dbReference type="STRING" id="10090.ENSMUSP00000026552"/>
<dbReference type="GlyGen" id="Q05421">
    <property type="glycosylation" value="1 site, 1 O-linked glycan (1 site)"/>
</dbReference>
<dbReference type="iPTMnet" id="Q05421"/>
<dbReference type="PhosphoSitePlus" id="Q05421"/>
<dbReference type="SwissPalm" id="Q05421"/>
<dbReference type="jPOST" id="Q05421"/>
<dbReference type="PaxDb" id="10090-ENSMUSP00000026552"/>
<dbReference type="PeptideAtlas" id="Q05421"/>
<dbReference type="ProteomicsDB" id="283443"/>
<dbReference type="Antibodypedia" id="2427">
    <property type="antibodies" value="649 antibodies from 38 providers"/>
</dbReference>
<dbReference type="DNASU" id="13106"/>
<dbReference type="Ensembl" id="ENSMUST00000026552.9">
    <property type="protein sequence ID" value="ENSMUSP00000026552.8"/>
    <property type="gene ID" value="ENSMUSG00000025479.10"/>
</dbReference>
<dbReference type="GeneID" id="13106"/>
<dbReference type="KEGG" id="mmu:13106"/>
<dbReference type="UCSC" id="uc009kic.1">
    <property type="organism name" value="mouse"/>
</dbReference>
<dbReference type="AGR" id="MGI:88607"/>
<dbReference type="CTD" id="1571"/>
<dbReference type="MGI" id="MGI:88607">
    <property type="gene designation" value="Cyp2e1"/>
</dbReference>
<dbReference type="VEuPathDB" id="HostDB:ENSMUSG00000025479"/>
<dbReference type="eggNOG" id="KOG0156">
    <property type="taxonomic scope" value="Eukaryota"/>
</dbReference>
<dbReference type="GeneTree" id="ENSGT00940000161594"/>
<dbReference type="HOGENOM" id="CLU_001570_22_3_1"/>
<dbReference type="InParanoid" id="Q05421"/>
<dbReference type="OMA" id="ESHRWRP"/>
<dbReference type="OrthoDB" id="1103324at2759"/>
<dbReference type="PhylomeDB" id="Q05421"/>
<dbReference type="TreeFam" id="TF352043"/>
<dbReference type="BioCyc" id="MetaCyc:MONOMER-12920"/>
<dbReference type="Reactome" id="R-MMU-211981">
    <property type="pathway name" value="Xenobiotics"/>
</dbReference>
<dbReference type="Reactome" id="R-MMU-211999">
    <property type="pathway name" value="CYP2E1 reactions"/>
</dbReference>
<dbReference type="Reactome" id="R-MMU-9027307">
    <property type="pathway name" value="Biosynthesis of maresin-like SPMs"/>
</dbReference>
<dbReference type="Reactome" id="R-MMU-9749641">
    <property type="pathway name" value="Aspirin ADME"/>
</dbReference>
<dbReference type="Reactome" id="R-MMU-9753281">
    <property type="pathway name" value="Paracetamol ADME"/>
</dbReference>
<dbReference type="UniPathway" id="UPA00199"/>
<dbReference type="BioGRID-ORCS" id="13106">
    <property type="hits" value="3 hits in 79 CRISPR screens"/>
</dbReference>
<dbReference type="ChiTaRS" id="Cyp2e1">
    <property type="organism name" value="mouse"/>
</dbReference>
<dbReference type="PRO" id="PR:Q05421"/>
<dbReference type="Proteomes" id="UP000000589">
    <property type="component" value="Chromosome 7"/>
</dbReference>
<dbReference type="RNAct" id="Q05421">
    <property type="molecule type" value="protein"/>
</dbReference>
<dbReference type="Bgee" id="ENSMUSG00000025479">
    <property type="expression patterns" value="Expressed in left lobe of liver and 104 other cell types or tissues"/>
</dbReference>
<dbReference type="ExpressionAtlas" id="Q05421">
    <property type="expression patterns" value="baseline and differential"/>
</dbReference>
<dbReference type="GO" id="GO:0005783">
    <property type="term" value="C:endoplasmic reticulum"/>
    <property type="evidence" value="ECO:0000314"/>
    <property type="project" value="MGI"/>
</dbReference>
<dbReference type="GO" id="GO:0005789">
    <property type="term" value="C:endoplasmic reticulum membrane"/>
    <property type="evidence" value="ECO:0007669"/>
    <property type="project" value="UniProtKB-SubCell"/>
</dbReference>
<dbReference type="GO" id="GO:0005743">
    <property type="term" value="C:mitochondrial inner membrane"/>
    <property type="evidence" value="ECO:0000250"/>
    <property type="project" value="UniProtKB"/>
</dbReference>
<dbReference type="GO" id="GO:0018601">
    <property type="term" value="F:4-nitrophenol 2-monooxygenase activity"/>
    <property type="evidence" value="ECO:0007669"/>
    <property type="project" value="Ensembl"/>
</dbReference>
<dbReference type="GO" id="GO:0019899">
    <property type="term" value="F:enzyme binding"/>
    <property type="evidence" value="ECO:0007669"/>
    <property type="project" value="Ensembl"/>
</dbReference>
<dbReference type="GO" id="GO:0020037">
    <property type="term" value="F:heme binding"/>
    <property type="evidence" value="ECO:0000250"/>
    <property type="project" value="UniProtKB"/>
</dbReference>
<dbReference type="GO" id="GO:0030544">
    <property type="term" value="F:Hsp70 protein binding"/>
    <property type="evidence" value="ECO:0000250"/>
    <property type="project" value="UniProtKB"/>
</dbReference>
<dbReference type="GO" id="GO:0051879">
    <property type="term" value="F:Hsp90 protein binding"/>
    <property type="evidence" value="ECO:0000250"/>
    <property type="project" value="UniProtKB"/>
</dbReference>
<dbReference type="GO" id="GO:0005506">
    <property type="term" value="F:iron ion binding"/>
    <property type="evidence" value="ECO:0007669"/>
    <property type="project" value="InterPro"/>
</dbReference>
<dbReference type="GO" id="GO:0120319">
    <property type="term" value="F:long-chain fatty acid omega-1 hydroxylase activity"/>
    <property type="evidence" value="ECO:0007669"/>
    <property type="project" value="Ensembl"/>
</dbReference>
<dbReference type="GO" id="GO:0004497">
    <property type="term" value="F:monooxygenase activity"/>
    <property type="evidence" value="ECO:0000314"/>
    <property type="project" value="MGI"/>
</dbReference>
<dbReference type="GO" id="GO:0018960">
    <property type="term" value="P:4-nitrophenol metabolic process"/>
    <property type="evidence" value="ECO:0007669"/>
    <property type="project" value="Ensembl"/>
</dbReference>
<dbReference type="GO" id="GO:0002933">
    <property type="term" value="P:lipid hydroxylation"/>
    <property type="evidence" value="ECO:0007669"/>
    <property type="project" value="Ensembl"/>
</dbReference>
<dbReference type="GO" id="GO:0001676">
    <property type="term" value="P:long-chain fatty acid metabolic process"/>
    <property type="evidence" value="ECO:0007669"/>
    <property type="project" value="Ensembl"/>
</dbReference>
<dbReference type="GO" id="GO:0016098">
    <property type="term" value="P:monoterpenoid metabolic process"/>
    <property type="evidence" value="ECO:0007669"/>
    <property type="project" value="Ensembl"/>
</dbReference>
<dbReference type="GO" id="GO:0009617">
    <property type="term" value="P:response to bacterium"/>
    <property type="evidence" value="ECO:0000270"/>
    <property type="project" value="MGI"/>
</dbReference>
<dbReference type="GO" id="GO:0008202">
    <property type="term" value="P:steroid metabolic process"/>
    <property type="evidence" value="ECO:0007669"/>
    <property type="project" value="Ensembl"/>
</dbReference>
<dbReference type="GO" id="GO:0006805">
    <property type="term" value="P:xenobiotic metabolic process"/>
    <property type="evidence" value="ECO:0007669"/>
    <property type="project" value="Ensembl"/>
</dbReference>
<dbReference type="CDD" id="cd20665">
    <property type="entry name" value="CYP2C-like"/>
    <property type="match status" value="1"/>
</dbReference>
<dbReference type="FunFam" id="1.10.630.10:FF:000001">
    <property type="entry name" value="Cytochrome P450, family 2"/>
    <property type="match status" value="1"/>
</dbReference>
<dbReference type="Gene3D" id="1.10.630.10">
    <property type="entry name" value="Cytochrome P450"/>
    <property type="match status" value="1"/>
</dbReference>
<dbReference type="InterPro" id="IPR001128">
    <property type="entry name" value="Cyt_P450"/>
</dbReference>
<dbReference type="InterPro" id="IPR017972">
    <property type="entry name" value="Cyt_P450_CS"/>
</dbReference>
<dbReference type="InterPro" id="IPR002401">
    <property type="entry name" value="Cyt_P450_E_grp-I"/>
</dbReference>
<dbReference type="InterPro" id="IPR008070">
    <property type="entry name" value="Cyt_P450_E_grp-I_CYP2E-like"/>
</dbReference>
<dbReference type="InterPro" id="IPR036396">
    <property type="entry name" value="Cyt_P450_sf"/>
</dbReference>
<dbReference type="InterPro" id="IPR050182">
    <property type="entry name" value="Cytochrome_P450_fam2"/>
</dbReference>
<dbReference type="PANTHER" id="PTHR24300:SF356">
    <property type="entry name" value="CYTOCHROME P450 2E1"/>
    <property type="match status" value="1"/>
</dbReference>
<dbReference type="PANTHER" id="PTHR24300">
    <property type="entry name" value="CYTOCHROME P450 508A4-RELATED"/>
    <property type="match status" value="1"/>
</dbReference>
<dbReference type="Pfam" id="PF00067">
    <property type="entry name" value="p450"/>
    <property type="match status" value="1"/>
</dbReference>
<dbReference type="PRINTS" id="PR00463">
    <property type="entry name" value="EP450I"/>
</dbReference>
<dbReference type="PRINTS" id="PR01687">
    <property type="entry name" value="EP450ICYP2E"/>
</dbReference>
<dbReference type="PRINTS" id="PR00385">
    <property type="entry name" value="P450"/>
</dbReference>
<dbReference type="SUPFAM" id="SSF48264">
    <property type="entry name" value="Cytochrome P450"/>
    <property type="match status" value="1"/>
</dbReference>
<dbReference type="PROSITE" id="PS00086">
    <property type="entry name" value="CYTOCHROME_P450"/>
    <property type="match status" value="1"/>
</dbReference>
<protein>
    <recommendedName>
        <fullName>Cytochrome P450 2E1</fullName>
        <ecNumber evidence="2">1.14.14.1</ecNumber>
    </recommendedName>
    <alternativeName>
        <fullName>4-nitrophenol 2-hydroxylase</fullName>
        <ecNumber evidence="2">1.14.13.n7</ecNumber>
    </alternativeName>
    <alternativeName>
        <fullName>CYPIIE1</fullName>
    </alternativeName>
    <alternativeName>
        <fullName>Cytochrome P450-ALC</fullName>
    </alternativeName>
    <alternativeName>
        <fullName>Cytochrome P450-J</fullName>
    </alternativeName>
</protein>
<name>CP2E1_MOUSE</name>
<keyword id="KW-0256">Endoplasmic reticulum</keyword>
<keyword id="KW-0276">Fatty acid metabolism</keyword>
<keyword id="KW-0349">Heme</keyword>
<keyword id="KW-0408">Iron</keyword>
<keyword id="KW-0443">Lipid metabolism</keyword>
<keyword id="KW-0472">Membrane</keyword>
<keyword id="KW-0479">Metal-binding</keyword>
<keyword id="KW-0492">Microsome</keyword>
<keyword id="KW-0496">Mitochondrion</keyword>
<keyword id="KW-0999">Mitochondrion inner membrane</keyword>
<keyword id="KW-0503">Monooxygenase</keyword>
<keyword id="KW-0521">NADP</keyword>
<keyword id="KW-0560">Oxidoreductase</keyword>
<keyword id="KW-1185">Reference proteome</keyword>